<keyword id="KW-0008">Acetylcholine receptor inhibiting toxin</keyword>
<keyword id="KW-0027">Amidation</keyword>
<keyword id="KW-1015">Disulfide bond</keyword>
<keyword id="KW-0528">Neurotoxin</keyword>
<keyword id="KW-0629">Postsynaptic neurotoxin</keyword>
<keyword id="KW-0964">Secreted</keyword>
<keyword id="KW-0800">Toxin</keyword>
<evidence type="ECO:0000250" key="1"/>
<evidence type="ECO:0000250" key="2">
    <source>
        <dbReference type="UniProtKB" id="K8DWB5"/>
    </source>
</evidence>
<evidence type="ECO:0000303" key="3">
    <source>
    </source>
</evidence>
<evidence type="ECO:0000305" key="4"/>
<comment type="function">
    <text evidence="2">Alpha-conotoxins act on postsynaptic membranes, they bind to the nicotinic acetylcholine receptors (nAChR) and thus inhibit them. This toxin inhibits alpha-3-beta-4, alpha-6/alpha-3-beta-4, and alpha-2-beta-4 nAChRs.</text>
</comment>
<comment type="subcellular location">
    <subcellularLocation>
        <location evidence="4">Secreted</location>
    </subcellularLocation>
</comment>
<comment type="tissue specificity">
    <text evidence="4">Expressed by the venom duct.</text>
</comment>
<comment type="domain">
    <text evidence="4">The cysteine framework is I (CC-C-C). Alpha4/6 pattern.</text>
</comment>
<comment type="miscellaneous">
    <text evidence="2">Negative results: does not show inhibition at neuronal alpha-4-beta-4, alpha-4-beta-2, alpha-6/alpha-3-beta-2-beta-3, alpha-3-beta-2, alpha-2-beta-2, alpha-9-alpha-10, alpha-7 nAChRs and muscle alpha-1-beta-1-delta-epsilon nAChR.</text>
</comment>
<comment type="similarity">
    <text evidence="4">Belongs to the conotoxin A superfamily.</text>
</comment>
<name>CA112_CONLI</name>
<protein>
    <recommendedName>
        <fullName>Alpha-conotoxin Li1.12</fullName>
    </recommendedName>
    <alternativeName>
        <fullName evidence="3">Livi_23</fullName>
    </alternativeName>
</protein>
<accession>H9N3R7</accession>
<proteinExistence type="inferred from homology"/>
<feature type="propeptide" id="PRO_0000439432" evidence="1">
    <location>
        <begin position="1" status="less than"/>
        <end position="15"/>
    </location>
</feature>
<feature type="peptide" id="PRO_0000439433" description="Alpha-conotoxin Li1.12" evidence="2">
    <location>
        <begin position="16"/>
        <end position="30"/>
    </location>
</feature>
<feature type="modified residue" description="Cysteine amide" evidence="2">
    <location>
        <position position="30"/>
    </location>
</feature>
<feature type="disulfide bond" evidence="2">
    <location>
        <begin position="17"/>
        <end position="23"/>
    </location>
</feature>
<feature type="disulfide bond" evidence="2">
    <location>
        <begin position="18"/>
        <end position="30"/>
    </location>
</feature>
<feature type="non-terminal residue">
    <location>
        <position position="1"/>
    </location>
</feature>
<dbReference type="EMBL" id="JF723419">
    <property type="protein sequence ID" value="AFD18484.1"/>
    <property type="molecule type" value="Genomic_DNA"/>
</dbReference>
<dbReference type="SMR" id="H9N3R7"/>
<dbReference type="EvolutionaryTrace" id="H9N3R7"/>
<dbReference type="GO" id="GO:0005576">
    <property type="term" value="C:extracellular region"/>
    <property type="evidence" value="ECO:0007669"/>
    <property type="project" value="UniProtKB-SubCell"/>
</dbReference>
<dbReference type="GO" id="GO:0035792">
    <property type="term" value="C:host cell postsynaptic membrane"/>
    <property type="evidence" value="ECO:0007669"/>
    <property type="project" value="UniProtKB-KW"/>
</dbReference>
<dbReference type="GO" id="GO:0030550">
    <property type="term" value="F:acetylcholine receptor inhibitor activity"/>
    <property type="evidence" value="ECO:0007669"/>
    <property type="project" value="UniProtKB-KW"/>
</dbReference>
<dbReference type="GO" id="GO:0090729">
    <property type="term" value="F:toxin activity"/>
    <property type="evidence" value="ECO:0007669"/>
    <property type="project" value="UniProtKB-KW"/>
</dbReference>
<dbReference type="InterPro" id="IPR009958">
    <property type="entry name" value="Conotoxin_a-typ"/>
</dbReference>
<dbReference type="Pfam" id="PF07365">
    <property type="entry name" value="Toxin_8"/>
    <property type="match status" value="1"/>
</dbReference>
<sequence length="31" mass="3082">AGNAKMSALMALTIRGCCSHPVCSAMSPICG</sequence>
<reference key="1">
    <citation type="journal article" date="2012" name="Mol. Biol. Evol.">
        <title>Extensive and continuous duplication facilitates rapid evolution and diversification of gene families.</title>
        <authorList>
            <person name="Chang D."/>
            <person name="Duda T.F. Jr."/>
        </authorList>
    </citation>
    <scope>NUCLEOTIDE SEQUENCE [GENOMIC DNA]</scope>
</reference>
<organism>
    <name type="scientific">Conus lividus</name>
    <name type="common">Livid cone</name>
    <dbReference type="NCBI Taxonomy" id="89426"/>
    <lineage>
        <taxon>Eukaryota</taxon>
        <taxon>Metazoa</taxon>
        <taxon>Spiralia</taxon>
        <taxon>Lophotrochozoa</taxon>
        <taxon>Mollusca</taxon>
        <taxon>Gastropoda</taxon>
        <taxon>Caenogastropoda</taxon>
        <taxon>Neogastropoda</taxon>
        <taxon>Conoidea</taxon>
        <taxon>Conidae</taxon>
        <taxon>Conus</taxon>
        <taxon>Lividoconus</taxon>
    </lineage>
</organism>